<accession>P64934</accession>
<accession>A0A1R3Y086</accession>
<accession>Q10685</accession>
<accession>X2BJY5</accession>
<proteinExistence type="inferred from homology"/>
<organism>
    <name type="scientific">Mycobacterium bovis (strain ATCC BAA-935 / AF2122/97)</name>
    <dbReference type="NCBI Taxonomy" id="233413"/>
    <lineage>
        <taxon>Bacteria</taxon>
        <taxon>Bacillati</taxon>
        <taxon>Actinomycetota</taxon>
        <taxon>Actinomycetes</taxon>
        <taxon>Mycobacteriales</taxon>
        <taxon>Mycobacteriaceae</taxon>
        <taxon>Mycobacterium</taxon>
        <taxon>Mycobacterium tuberculosis complex</taxon>
    </lineage>
</organism>
<gene>
    <name type="ordered locus">BQ2027_MB2102C</name>
</gene>
<reference key="1">
    <citation type="journal article" date="2003" name="Proc. Natl. Acad. Sci. U.S.A.">
        <title>The complete genome sequence of Mycobacterium bovis.</title>
        <authorList>
            <person name="Garnier T."/>
            <person name="Eiglmeier K."/>
            <person name="Camus J.-C."/>
            <person name="Medina N."/>
            <person name="Mansoor H."/>
            <person name="Pryor M."/>
            <person name="Duthoy S."/>
            <person name="Grondin S."/>
            <person name="Lacroix C."/>
            <person name="Monsempe C."/>
            <person name="Simon S."/>
            <person name="Harris B."/>
            <person name="Atkin R."/>
            <person name="Doggett J."/>
            <person name="Mayes R."/>
            <person name="Keating L."/>
            <person name="Wheeler P.R."/>
            <person name="Parkhill J."/>
            <person name="Barrell B.G."/>
            <person name="Cole S.T."/>
            <person name="Gordon S.V."/>
            <person name="Hewinson R.G."/>
        </authorList>
    </citation>
    <scope>NUCLEOTIDE SEQUENCE [LARGE SCALE GENOMIC DNA]</scope>
    <source>
        <strain>ATCC BAA-935 / AF2122/97</strain>
    </source>
</reference>
<reference key="2">
    <citation type="journal article" date="2017" name="Genome Announc.">
        <title>Updated reference genome sequence and annotation of Mycobacterium bovis AF2122/97.</title>
        <authorList>
            <person name="Malone K.M."/>
            <person name="Farrell D."/>
            <person name="Stuber T.P."/>
            <person name="Schubert O.T."/>
            <person name="Aebersold R."/>
            <person name="Robbe-Austerman S."/>
            <person name="Gordon S.V."/>
        </authorList>
    </citation>
    <scope>NUCLEOTIDE SEQUENCE [LARGE SCALE GENOMIC DNA]</scope>
    <scope>GENOME REANNOTATION</scope>
    <source>
        <strain>ATCC BAA-935 / AF2122/97</strain>
    </source>
</reference>
<comment type="subcellular location">
    <subcellularLocation>
        <location evidence="3">Cell membrane</location>
        <topology evidence="3">Multi-pass membrane protein</topology>
    </subcellularLocation>
</comment>
<name>Y2102_MYCBO</name>
<dbReference type="EMBL" id="LT708304">
    <property type="protein sequence ID" value="SIU00709.1"/>
    <property type="molecule type" value="Genomic_DNA"/>
</dbReference>
<dbReference type="RefSeq" id="NP_855752.1">
    <property type="nucleotide sequence ID" value="NC_002945.3"/>
</dbReference>
<dbReference type="RefSeq" id="WP_003899159.1">
    <property type="nucleotide sequence ID" value="NC_002945.4"/>
</dbReference>
<dbReference type="SMR" id="P64934"/>
<dbReference type="KEGG" id="mbo:BQ2027_MB2102C"/>
<dbReference type="PATRIC" id="fig|233413.5.peg.2311"/>
<dbReference type="Proteomes" id="UP000001419">
    <property type="component" value="Chromosome"/>
</dbReference>
<dbReference type="GO" id="GO:0005886">
    <property type="term" value="C:plasma membrane"/>
    <property type="evidence" value="ECO:0007669"/>
    <property type="project" value="UniProtKB-SubCell"/>
</dbReference>
<sequence length="323" mass="33321">MLATLSQIRAWSTEHLIDAAGYWTETADRWEDVFLQMRNQAHAIAWNGAGGDGLRQRTRADFSTVSGIADQLRRAATIARNGAGTIDAAQRRVMYAVEDAQDAGFNVGEDLSVTDTKTTQPAAVQAARLAQAQALAGDIRLRVGQLVAAENEVSGQLAATTGDVGNVRFAGAPVVAHSAVQLVDFFKQDGPTPPPPGAPHPSGGADGPYSDPITSMMLPPAGTEAPVSDATKRWVDNMVNELAARPPDDPIAVEARRLAFQALHRPCNSAEWTAAVAGFAGSSAGVVGTALAIPAGPADWALLGAALLGVGGSGAAVVNCATK</sequence>
<evidence type="ECO:0000255" key="1"/>
<evidence type="ECO:0000256" key="2">
    <source>
        <dbReference type="SAM" id="MobiDB-lite"/>
    </source>
</evidence>
<evidence type="ECO:0000305" key="3"/>
<feature type="signal peptide" evidence="1">
    <location>
        <begin position="1"/>
        <end position="45"/>
    </location>
</feature>
<feature type="chain" id="PRO_0000014121" description="Uncharacterized protein Mb2102c">
    <location>
        <begin position="46"/>
        <end position="323"/>
    </location>
</feature>
<feature type="transmembrane region" description="Helical" evidence="1">
    <location>
        <begin position="269"/>
        <end position="289"/>
    </location>
</feature>
<feature type="transmembrane region" description="Helical" evidence="1">
    <location>
        <begin position="290"/>
        <end position="310"/>
    </location>
</feature>
<feature type="region of interest" description="Disordered" evidence="2">
    <location>
        <begin position="186"/>
        <end position="227"/>
    </location>
</feature>
<protein>
    <recommendedName>
        <fullName>Uncharacterized protein Mb2102c</fullName>
    </recommendedName>
</protein>
<keyword id="KW-1003">Cell membrane</keyword>
<keyword id="KW-0472">Membrane</keyword>
<keyword id="KW-1185">Reference proteome</keyword>
<keyword id="KW-0732">Signal</keyword>
<keyword id="KW-0812">Transmembrane</keyword>
<keyword id="KW-1133">Transmembrane helix</keyword>